<reference key="1">
    <citation type="journal article" date="2000" name="Peptides">
        <title>Sequence of a gene from Bombina orientalis coding for the antimicrobial peptide BLP-7.</title>
        <authorList>
            <person name="Miele R."/>
            <person name="Borro M."/>
            <person name="Fiocco D."/>
            <person name="Barra D."/>
            <person name="Simmaco M."/>
        </authorList>
    </citation>
    <scope>NUCLEOTIDE SEQUENCE [GENOMIC DNA]</scope>
    <source>
        <tissue>Liver</tissue>
    </source>
</reference>
<reference key="2">
    <citation type="journal article" date="2012" name="BMC Biotechnol.">
        <title>A novel PCR-based method for high throughput prokaryotic expression of antimicrobial peptide genes.</title>
        <authorList>
            <person name="Ke T."/>
            <person name="Liang S."/>
            <person name="Huang J."/>
            <person name="Mao H."/>
            <person name="Chen J."/>
            <person name="Dong C."/>
            <person name="Huang J."/>
            <person name="Liu S."/>
            <person name="Kang J."/>
            <person name="Liu D."/>
            <person name="Ma X."/>
        </authorList>
    </citation>
    <scope>FUNCTION</scope>
</reference>
<reference key="3">
    <citation type="journal article" date="2018" name="Chem. Biol. Drug Des.">
        <title>Discovery of two bombinin peptides with antimicrobial and anticancer activities from the skin secretion of Oriental fire-bellied toad, Bombina orientalis.</title>
        <authorList>
            <person name="Zhou C."/>
            <person name="Wang Z."/>
            <person name="Peng X."/>
            <person name="Liu Y."/>
            <person name="Lin Y."/>
            <person name="Zhang Z."/>
            <person name="Qiu Y."/>
            <person name="Jin M."/>
            <person name="Wang R."/>
            <person name="Kong D."/>
        </authorList>
    </citation>
    <scope>FUNCTION</scope>
    <scope>MASS SPECTROMETRY</scope>
    <scope>AMIDATION AT ASN-70</scope>
    <scope>SYNTHESIS OF 44-70</scope>
</reference>
<reference key="4">
    <citation type="journal article" date="2020" name="Toxicon">
        <title>Inhibitory effect of the antimicrobial peptide BLP-7 against Propionibacterium acnes and its anti-inflammatory effect on acne vulgaris.</title>
        <authorList>
            <person name="Wu Y."/>
            <person name="Qiang Y."/>
            <person name="Cao K."/>
            <person name="Zhang W."/>
            <person name="Zhang G."/>
        </authorList>
    </citation>
    <scope>FUNCTION</scope>
    <scope>SYNTHESIS OF 44-70</scope>
    <scope>BIOPHYSICOCHEMICAL PROPERTIES</scope>
    <scope>PHARMACEUTICAL</scope>
</reference>
<evidence type="ECO:0000250" key="1">
    <source>
        <dbReference type="UniProtKB" id="A0A219CM62"/>
    </source>
</evidence>
<evidence type="ECO:0000250" key="2">
    <source>
        <dbReference type="UniProtKB" id="Q58T45"/>
    </source>
</evidence>
<evidence type="ECO:0000255" key="3"/>
<evidence type="ECO:0000269" key="4">
    <source>
    </source>
</evidence>
<evidence type="ECO:0000269" key="5">
    <source>
    </source>
</evidence>
<evidence type="ECO:0000269" key="6">
    <source>
    </source>
</evidence>
<evidence type="ECO:0000303" key="7">
    <source>
    </source>
</evidence>
<evidence type="ECO:0000305" key="8"/>
<evidence type="ECO:0000305" key="9">
    <source>
    </source>
</evidence>
<evidence type="ECO:0000305" key="10">
    <source>
    </source>
</evidence>
<name>BMN72_BOMOR</name>
<accession>Q9DET7</accession>
<dbReference type="EMBL" id="AJ298827">
    <property type="protein sequence ID" value="CAC11122.1"/>
    <property type="molecule type" value="Genomic_DNA"/>
</dbReference>
<dbReference type="SMR" id="Q9DET7"/>
<dbReference type="GO" id="GO:0005576">
    <property type="term" value="C:extracellular region"/>
    <property type="evidence" value="ECO:0007669"/>
    <property type="project" value="UniProtKB-SubCell"/>
</dbReference>
<dbReference type="GO" id="GO:0042742">
    <property type="term" value="P:defense response to bacterium"/>
    <property type="evidence" value="ECO:0007669"/>
    <property type="project" value="UniProtKB-KW"/>
</dbReference>
<dbReference type="GO" id="GO:0050832">
    <property type="term" value="P:defense response to fungus"/>
    <property type="evidence" value="ECO:0007669"/>
    <property type="project" value="UniProtKB-KW"/>
</dbReference>
<dbReference type="GO" id="GO:0031640">
    <property type="term" value="P:killing of cells of another organism"/>
    <property type="evidence" value="ECO:0007669"/>
    <property type="project" value="UniProtKB-KW"/>
</dbReference>
<dbReference type="InterPro" id="IPR007962">
    <property type="entry name" value="Bombinin"/>
</dbReference>
<dbReference type="Pfam" id="PF05298">
    <property type="entry name" value="Bombinin"/>
    <property type="match status" value="1"/>
</dbReference>
<feature type="signal peptide" evidence="3">
    <location>
        <begin position="1"/>
        <end position="18"/>
    </location>
</feature>
<feature type="propeptide" id="PRO_0000451082" evidence="9">
    <location>
        <begin position="19"/>
        <end position="43"/>
    </location>
</feature>
<feature type="peptide" id="PRO_5004325163" description="Bombinin-like peptide 7" evidence="5">
    <location>
        <begin position="44"/>
        <end position="70"/>
    </location>
</feature>
<feature type="propeptide" id="PRO_0000451083" evidence="9">
    <location>
        <begin position="74"/>
        <end position="123"/>
    </location>
</feature>
<feature type="peptide" id="PRO_0000451084" description="Bombinin GH-2" evidence="2">
    <location>
        <begin position="124"/>
        <end position="143"/>
    </location>
</feature>
<feature type="modified residue" description="Asparagine amide" evidence="5">
    <location>
        <position position="70"/>
    </location>
</feature>
<feature type="modified residue" description="Isoleucine amide" evidence="2">
    <location>
        <position position="143"/>
    </location>
</feature>
<keyword id="KW-0027">Amidation</keyword>
<keyword id="KW-0878">Amphibian defense peptide</keyword>
<keyword id="KW-0044">Antibiotic</keyword>
<keyword id="KW-0929">Antimicrobial</keyword>
<keyword id="KW-0165">Cleavage on pair of basic residues</keyword>
<keyword id="KW-0295">Fungicide</keyword>
<keyword id="KW-0582">Pharmaceutical</keyword>
<keyword id="KW-0964">Secreted</keyword>
<keyword id="KW-0732">Signal</keyword>
<organism>
    <name type="scientific">Bombina orientalis</name>
    <name type="common">Oriental fire-bellied toad</name>
    <dbReference type="NCBI Taxonomy" id="8346"/>
    <lineage>
        <taxon>Eukaryota</taxon>
        <taxon>Metazoa</taxon>
        <taxon>Chordata</taxon>
        <taxon>Craniata</taxon>
        <taxon>Vertebrata</taxon>
        <taxon>Euteleostomi</taxon>
        <taxon>Amphibia</taxon>
        <taxon>Batrachia</taxon>
        <taxon>Anura</taxon>
        <taxon>Bombinatoridae</taxon>
        <taxon>Bombina</taxon>
    </lineage>
</organism>
<sequence>MNFKYIVAVSFLIASTYARSVKNDEQSLSQRDVLEEESLREIRGIGGALLSAGKSALKGLAKGLAEHFANGKRTAEEHEVMKRLEAVMRDLDSLDYPEEASEMETRSFNQEEIANLFTKKEKRILGPVLDLVGRALRGLLKKIG</sequence>
<proteinExistence type="evidence at protein level"/>
<comment type="function">
    <molecule>Bombinin-like peptide 7</molecule>
    <text evidence="4 5 6">Antimicrobial peptide with activity against Gram-positive and -negative bacteria and fungi (PubMed:22439858, PubMed:32540219). Shows activity against P.acnes (MIC=5 uM), E.coli (MIC=5-6.3 uM), S.aureus (MIC=5-6.3 uM), M.luteus, S.cerevisiae and C.albicans (MIC=10-12.5 uM) (PubMed:22439858, PubMed:28636781, PubMed:32540219). Also reduces the production of interleukin (IL)-8 and granulocyte-macrophage colony stimulating factor (CSF2) in normal human epidermal keratinocytes (NHEKs) (PubMed:32540219). Shows anticancer activity against three human hepatoma cell lines (PubMed:28636781). In vivo, using the rat ear edema model, suppress P.acnes-induced skin inflammation, significantly reducing the ear thickness (PubMed:32540219). Shows weak hemolytic activity against human erythrocytes (PubMed:28636781).</text>
</comment>
<comment type="function">
    <molecule>Bombinin GH-2</molecule>
    <text evidence="1">Shows weak antimicrobial activity but high hemolytic activity.</text>
</comment>
<comment type="biophysicochemical properties">
    <molecule>Bombinin-like peptide 7</molecule>
    <phDependence>
        <text evidence="6">Stable from pH 3.0 to 12.0.</text>
    </phDependence>
    <temperatureDependence>
        <text evidence="6">Highly thermostable, when continuously exposed at the temperatures ranging from 20 to 100 degrees Celsius for 30 minutes.</text>
    </temperatureDependence>
</comment>
<comment type="subcellular location">
    <subcellularLocation>
        <location evidence="10">Secreted</location>
    </subcellularLocation>
</comment>
<comment type="tissue specificity">
    <text evidence="10">Expressed by the skin glands.</text>
</comment>
<comment type="mass spectrometry">
    <molecule>Bombinin-like peptide 7</molecule>
</comment>
<comment type="pharmaceutical">
    <molecule>Bombinin-like peptide 7</molecule>
    <text evidence="10">Could be used as a potential agent in the treatment against acne, since it shows antibacterial activity against P.acnes and it both reduces the production of pro-inflammatory cytokines and the skin inflammation induced by P.acnes in rat ear edema model.</text>
</comment>
<comment type="miscellaneous">
    <text evidence="8">BLP-7 is also encoded by another gene from the same species (AC A0A219CM62).</text>
</comment>
<comment type="similarity">
    <text evidence="8">Belongs to the bombinin family.</text>
</comment>
<comment type="online information" name="The antimicrobial peptide database">
    <link uri="https://wangapd3.com/database/query_output.php?ID=00054"/>
</comment>
<protein>
    <recommendedName>
        <fullName evidence="8">Bombinins BLP-7/GH-2</fullName>
    </recommendedName>
    <component>
        <recommendedName>
            <fullName evidence="7">Bombinin-like peptide 7</fullName>
            <shortName evidence="7">BLP-7</shortName>
        </recommendedName>
    </component>
    <component>
        <recommendedName>
            <fullName evidence="7">Bombinin GH-2</fullName>
        </recommendedName>
    </component>
</protein>